<accession>A7ZTS5</accession>
<reference key="1">
    <citation type="journal article" date="2008" name="J. Bacteriol.">
        <title>The pangenome structure of Escherichia coli: comparative genomic analysis of E. coli commensal and pathogenic isolates.</title>
        <authorList>
            <person name="Rasko D.A."/>
            <person name="Rosovitz M.J."/>
            <person name="Myers G.S.A."/>
            <person name="Mongodin E.F."/>
            <person name="Fricke W.F."/>
            <person name="Gajer P."/>
            <person name="Crabtree J."/>
            <person name="Sebaihia M."/>
            <person name="Thomson N.R."/>
            <person name="Chaudhuri R."/>
            <person name="Henderson I.R."/>
            <person name="Sperandio V."/>
            <person name="Ravel J."/>
        </authorList>
    </citation>
    <scope>NUCLEOTIDE SEQUENCE [LARGE SCALE GENOMIC DNA]</scope>
    <source>
        <strain>E24377A / ETEC</strain>
    </source>
</reference>
<name>BGLH_ECO24</name>
<dbReference type="EMBL" id="CP000800">
    <property type="protein sequence ID" value="ABV20826.1"/>
    <property type="molecule type" value="Genomic_DNA"/>
</dbReference>
<dbReference type="RefSeq" id="WP_000489866.1">
    <property type="nucleotide sequence ID" value="NC_009801.1"/>
</dbReference>
<dbReference type="SMR" id="A7ZTS5"/>
<dbReference type="KEGG" id="ecw:EcE24377A_4229"/>
<dbReference type="HOGENOM" id="CLU_032473_2_1_6"/>
<dbReference type="Proteomes" id="UP000001122">
    <property type="component" value="Chromosome"/>
</dbReference>
<dbReference type="GO" id="GO:0009279">
    <property type="term" value="C:cell outer membrane"/>
    <property type="evidence" value="ECO:0007669"/>
    <property type="project" value="UniProtKB-SubCell"/>
</dbReference>
<dbReference type="GO" id="GO:0046930">
    <property type="term" value="C:pore complex"/>
    <property type="evidence" value="ECO:0007669"/>
    <property type="project" value="UniProtKB-KW"/>
</dbReference>
<dbReference type="GO" id="GO:0015144">
    <property type="term" value="F:carbohydrate transmembrane transporter activity"/>
    <property type="evidence" value="ECO:0007669"/>
    <property type="project" value="TreeGrafter"/>
</dbReference>
<dbReference type="GO" id="GO:0015288">
    <property type="term" value="F:porin activity"/>
    <property type="evidence" value="ECO:0007669"/>
    <property type="project" value="UniProtKB-KW"/>
</dbReference>
<dbReference type="GO" id="GO:0006811">
    <property type="term" value="P:monoatomic ion transport"/>
    <property type="evidence" value="ECO:0007669"/>
    <property type="project" value="UniProtKB-KW"/>
</dbReference>
<dbReference type="GO" id="GO:0015774">
    <property type="term" value="P:polysaccharide transport"/>
    <property type="evidence" value="ECO:0007669"/>
    <property type="project" value="TreeGrafter"/>
</dbReference>
<dbReference type="CDD" id="cd01346">
    <property type="entry name" value="Maltoporin-like"/>
    <property type="match status" value="1"/>
</dbReference>
<dbReference type="FunFam" id="2.40.170.10:FF:000002">
    <property type="entry name" value="Cryptic outer membrane porin BglH"/>
    <property type="match status" value="1"/>
</dbReference>
<dbReference type="Gene3D" id="2.40.170.10">
    <property type="entry name" value="Porin, LamB type"/>
    <property type="match status" value="1"/>
</dbReference>
<dbReference type="InterPro" id="IPR050286">
    <property type="entry name" value="G_neg_Bact_CarbUptk_Porin"/>
</dbReference>
<dbReference type="InterPro" id="IPR021570">
    <property type="entry name" value="LamB-type_porin_N_dom"/>
</dbReference>
<dbReference type="InterPro" id="IPR003192">
    <property type="entry name" value="Porin_LamB"/>
</dbReference>
<dbReference type="InterPro" id="IPR036998">
    <property type="entry name" value="Porin_LamB_sf"/>
</dbReference>
<dbReference type="PANTHER" id="PTHR38762">
    <property type="entry name" value="CRYPTIC OUTER MEMBRANE PORIN BGLH-RELATED"/>
    <property type="match status" value="1"/>
</dbReference>
<dbReference type="PANTHER" id="PTHR38762:SF1">
    <property type="entry name" value="CRYPTIC OUTER MEMBRANE PORIN BGLH-RELATED"/>
    <property type="match status" value="1"/>
</dbReference>
<dbReference type="Pfam" id="PF02264">
    <property type="entry name" value="LamB"/>
    <property type="match status" value="1"/>
</dbReference>
<dbReference type="Pfam" id="PF11471">
    <property type="entry name" value="Sugarporin_N"/>
    <property type="match status" value="1"/>
</dbReference>
<dbReference type="SUPFAM" id="SSF56935">
    <property type="entry name" value="Porins"/>
    <property type="match status" value="1"/>
</dbReference>
<gene>
    <name type="primary">bglH</name>
    <name type="ordered locus">EcE24377A_4229</name>
</gene>
<protein>
    <recommendedName>
        <fullName>Putative outer membrane porin BglH</fullName>
    </recommendedName>
</protein>
<sequence>MFRRNLITSAILLMAPLAFSAQSLAESLTVEQRLELLEKALRETQSELKKYKDEEKKKYTPATVNRSVSTNDQGYAANPFPTSSAAKPDAVLVKNEEKNASETGSIYSSMTLKDFSKFVKDEIGFSYNGYYRSGWGTASHGSPKSWAIGSLGRFGNEYSGWFDLQLKQRVYNENGKRVDAVVMMDGNVGQQYSTGWFGDNAGGENFMQFSDMYVTTKGFLPFAPEADFWVGKHGAPKIEIQILDWKTQRTDAAAGVGLENWKVGPGKIDIALVREDVDDYDRSLQNKQQINTNTIDLRYKDIPLWDKATLMVSGRYVTANESASEKDNQDNNGYYDWKDTWMFGTSLTQKFDKGGFNEFSFLVANNSIASNFGRYAGASPFTTFNGRYYGDHTGGTAVRLTSQGEAYIGDHFIVANAIVYSFGNDIYSYETGAHSDFESIRAVVRPAYIWDQYNQTGVELGYFTQQNKDANSNKFNESGYKTTLFHTFKVNTSMLTSRPEIRFYATYIKALENELDGFTFGDNKDDQFAVGAQAEIWW</sequence>
<feature type="signal peptide" evidence="1">
    <location>
        <begin position="1"/>
        <end position="25"/>
    </location>
</feature>
<feature type="chain" id="PRO_0000355020" description="Putative outer membrane porin BglH">
    <location>
        <begin position="26"/>
        <end position="538"/>
    </location>
</feature>
<feature type="region of interest" description="Disordered" evidence="2">
    <location>
        <begin position="52"/>
        <end position="82"/>
    </location>
</feature>
<feature type="compositionally biased region" description="Polar residues" evidence="2">
    <location>
        <begin position="62"/>
        <end position="73"/>
    </location>
</feature>
<keyword id="KW-0998">Cell outer membrane</keyword>
<keyword id="KW-0406">Ion transport</keyword>
<keyword id="KW-0472">Membrane</keyword>
<keyword id="KW-0626">Porin</keyword>
<keyword id="KW-1185">Reference proteome</keyword>
<keyword id="KW-0732">Signal</keyword>
<keyword id="KW-0812">Transmembrane</keyword>
<keyword id="KW-1134">Transmembrane beta strand</keyword>
<keyword id="KW-0813">Transport</keyword>
<proteinExistence type="inferred from homology"/>
<comment type="function">
    <text evidence="3">May be a sugar porin with a broad carbohydrate specificity.</text>
</comment>
<comment type="subcellular location">
    <subcellularLocation>
        <location evidence="3">Cell outer membrane</location>
        <topology evidence="3">Multi-pass membrane protein</topology>
    </subcellularLocation>
</comment>
<comment type="similarity">
    <text evidence="3">Belongs to the porin LamB (TC 1.B.3) family.</text>
</comment>
<organism>
    <name type="scientific">Escherichia coli O139:H28 (strain E24377A / ETEC)</name>
    <dbReference type="NCBI Taxonomy" id="331111"/>
    <lineage>
        <taxon>Bacteria</taxon>
        <taxon>Pseudomonadati</taxon>
        <taxon>Pseudomonadota</taxon>
        <taxon>Gammaproteobacteria</taxon>
        <taxon>Enterobacterales</taxon>
        <taxon>Enterobacteriaceae</taxon>
        <taxon>Escherichia</taxon>
    </lineage>
</organism>
<evidence type="ECO:0000255" key="1"/>
<evidence type="ECO:0000256" key="2">
    <source>
        <dbReference type="SAM" id="MobiDB-lite"/>
    </source>
</evidence>
<evidence type="ECO:0000305" key="3"/>